<proteinExistence type="inferred from homology"/>
<feature type="chain" id="PRO_1000024122" description="Dihydroorotate dehydrogenase B (NAD(+)), catalytic subunit">
    <location>
        <begin position="1"/>
        <end position="309"/>
    </location>
</feature>
<feature type="active site" description="Nucleophile">
    <location>
        <position position="130"/>
    </location>
</feature>
<feature type="binding site" evidence="1">
    <location>
        <position position="21"/>
    </location>
    <ligand>
        <name>FMN</name>
        <dbReference type="ChEBI" id="CHEBI:58210"/>
    </ligand>
</feature>
<feature type="binding site" evidence="1">
    <location>
        <begin position="45"/>
        <end position="46"/>
    </location>
    <ligand>
        <name>FMN</name>
        <dbReference type="ChEBI" id="CHEBI:58210"/>
    </ligand>
</feature>
<feature type="binding site" evidence="1">
    <location>
        <position position="45"/>
    </location>
    <ligand>
        <name>substrate</name>
    </ligand>
</feature>
<feature type="binding site" evidence="1">
    <location>
        <begin position="69"/>
        <end position="73"/>
    </location>
    <ligand>
        <name>substrate</name>
    </ligand>
</feature>
<feature type="binding site" evidence="1">
    <location>
        <position position="99"/>
    </location>
    <ligand>
        <name>FMN</name>
        <dbReference type="ChEBI" id="CHEBI:58210"/>
    </ligand>
</feature>
<feature type="binding site" evidence="1">
    <location>
        <position position="127"/>
    </location>
    <ligand>
        <name>FMN</name>
        <dbReference type="ChEBI" id="CHEBI:58210"/>
    </ligand>
</feature>
<feature type="binding site" evidence="1">
    <location>
        <position position="127"/>
    </location>
    <ligand>
        <name>substrate</name>
    </ligand>
</feature>
<feature type="binding site" evidence="1">
    <location>
        <position position="165"/>
    </location>
    <ligand>
        <name>FMN</name>
        <dbReference type="ChEBI" id="CHEBI:58210"/>
    </ligand>
</feature>
<feature type="binding site" evidence="1">
    <location>
        <position position="191"/>
    </location>
    <ligand>
        <name>FMN</name>
        <dbReference type="ChEBI" id="CHEBI:58210"/>
    </ligand>
</feature>
<feature type="binding site" evidence="1">
    <location>
        <begin position="192"/>
        <end position="193"/>
    </location>
    <ligand>
        <name>substrate</name>
    </ligand>
</feature>
<feature type="binding site" evidence="1">
    <location>
        <position position="217"/>
    </location>
    <ligand>
        <name>FMN</name>
        <dbReference type="ChEBI" id="CHEBI:58210"/>
    </ligand>
</feature>
<feature type="binding site" evidence="1">
    <location>
        <begin position="243"/>
        <end position="244"/>
    </location>
    <ligand>
        <name>FMN</name>
        <dbReference type="ChEBI" id="CHEBI:58210"/>
    </ligand>
</feature>
<feature type="binding site" evidence="1">
    <location>
        <begin position="265"/>
        <end position="266"/>
    </location>
    <ligand>
        <name>FMN</name>
        <dbReference type="ChEBI" id="CHEBI:58210"/>
    </ligand>
</feature>
<sequence>MNRLQVELPGLSLKNPIIPASGCFGFGREYAQFYDLSVLGSIMIKATTEQPRYGNPTPRVAETPGGMLNAIGLQNPGLEKVMNSELPWLEQFDLPIIANVAGSQAEDYVAVAKEISKAPNVHALELNISCPNVKTGGIAFGTNPEIAADLTKRVKEVSEVPVYVKLSPNVANIVEIAKAIANAGADGLTMINTLLGMRLDLKTAKPILANRTGGLSGPAIKPVAIRMVHEVSQAVNIPIIGMGGIETAEDVIEFFYAGASAVAVGTANFIDPFVCPTIIEELPALLDELGFDHISECQGRSWKQTCHSR</sequence>
<name>PYRDB_BACAH</name>
<organism>
    <name type="scientific">Bacillus thuringiensis (strain Al Hakam)</name>
    <dbReference type="NCBI Taxonomy" id="412694"/>
    <lineage>
        <taxon>Bacteria</taxon>
        <taxon>Bacillati</taxon>
        <taxon>Bacillota</taxon>
        <taxon>Bacilli</taxon>
        <taxon>Bacillales</taxon>
        <taxon>Bacillaceae</taxon>
        <taxon>Bacillus</taxon>
        <taxon>Bacillus cereus group</taxon>
    </lineage>
</organism>
<protein>
    <recommendedName>
        <fullName>Dihydroorotate dehydrogenase B (NAD(+)), catalytic subunit</fullName>
        <shortName>DHOD B</shortName>
        <shortName>DHODase B</shortName>
        <shortName>DHOdehase B</shortName>
        <ecNumber>1.3.1.14</ecNumber>
    </recommendedName>
    <alternativeName>
        <fullName>Dihydroorotate oxidase B</fullName>
    </alternativeName>
    <alternativeName>
        <fullName>Orotate reductase (NADH)</fullName>
    </alternativeName>
</protein>
<keyword id="KW-0963">Cytoplasm</keyword>
<keyword id="KW-0285">Flavoprotein</keyword>
<keyword id="KW-0288">FMN</keyword>
<keyword id="KW-0520">NAD</keyword>
<keyword id="KW-0560">Oxidoreductase</keyword>
<keyword id="KW-0665">Pyrimidine biosynthesis</keyword>
<accession>A0RHQ6</accession>
<comment type="function">
    <text evidence="1">Catalyzes the conversion of dihydroorotate to orotate with NAD(+) as electron acceptor.</text>
</comment>
<comment type="catalytic activity">
    <reaction>
        <text>(S)-dihydroorotate + NAD(+) = orotate + NADH + H(+)</text>
        <dbReference type="Rhea" id="RHEA:13513"/>
        <dbReference type="ChEBI" id="CHEBI:15378"/>
        <dbReference type="ChEBI" id="CHEBI:30839"/>
        <dbReference type="ChEBI" id="CHEBI:30864"/>
        <dbReference type="ChEBI" id="CHEBI:57540"/>
        <dbReference type="ChEBI" id="CHEBI:57945"/>
        <dbReference type="EC" id="1.3.1.14"/>
    </reaction>
</comment>
<comment type="cofactor">
    <cofactor evidence="1">
        <name>FMN</name>
        <dbReference type="ChEBI" id="CHEBI:58210"/>
    </cofactor>
    <text evidence="1">Binds 1 FMN per subunit.</text>
</comment>
<comment type="pathway">
    <text>Pyrimidine metabolism; UMP biosynthesis via de novo pathway; orotate from (S)-dihydroorotate (NAD(+) route): step 1/1.</text>
</comment>
<comment type="subunit">
    <text evidence="1">Heterotetramer of 2 PyrK and 2 PyrD type B subunits.</text>
</comment>
<comment type="subcellular location">
    <subcellularLocation>
        <location evidence="1">Cytoplasm</location>
    </subcellularLocation>
</comment>
<comment type="similarity">
    <text evidence="2">Belongs to the dihydroorotate dehydrogenase family. Type 1 subfamily.</text>
</comment>
<evidence type="ECO:0000250" key="1"/>
<evidence type="ECO:0000305" key="2"/>
<dbReference type="EC" id="1.3.1.14"/>
<dbReference type="EMBL" id="CP000485">
    <property type="protein sequence ID" value="ABK86749.1"/>
    <property type="molecule type" value="Genomic_DNA"/>
</dbReference>
<dbReference type="RefSeq" id="WP_001081056.1">
    <property type="nucleotide sequence ID" value="NC_008600.1"/>
</dbReference>
<dbReference type="SMR" id="A0RHQ6"/>
<dbReference type="KEGG" id="btl:BALH_3514"/>
<dbReference type="HOGENOM" id="CLU_042042_0_0_9"/>
<dbReference type="UniPathway" id="UPA00070">
    <property type="reaction ID" value="UER00945"/>
</dbReference>
<dbReference type="GO" id="GO:0005737">
    <property type="term" value="C:cytoplasm"/>
    <property type="evidence" value="ECO:0007669"/>
    <property type="project" value="UniProtKB-SubCell"/>
</dbReference>
<dbReference type="GO" id="GO:0004589">
    <property type="term" value="F:dihydroorotate dehydrogenase (NAD+) activity"/>
    <property type="evidence" value="ECO:0007669"/>
    <property type="project" value="UniProtKB-EC"/>
</dbReference>
<dbReference type="GO" id="GO:0006207">
    <property type="term" value="P:'de novo' pyrimidine nucleobase biosynthetic process"/>
    <property type="evidence" value="ECO:0007669"/>
    <property type="project" value="InterPro"/>
</dbReference>
<dbReference type="GO" id="GO:0044205">
    <property type="term" value="P:'de novo' UMP biosynthetic process"/>
    <property type="evidence" value="ECO:0007669"/>
    <property type="project" value="UniProtKB-UniRule"/>
</dbReference>
<dbReference type="CDD" id="cd04740">
    <property type="entry name" value="DHOD_1B_like"/>
    <property type="match status" value="1"/>
</dbReference>
<dbReference type="FunFam" id="3.20.20.70:FF:000069">
    <property type="entry name" value="Dihydroorotate dehydrogenase"/>
    <property type="match status" value="1"/>
</dbReference>
<dbReference type="Gene3D" id="3.20.20.70">
    <property type="entry name" value="Aldolase class I"/>
    <property type="match status" value="1"/>
</dbReference>
<dbReference type="HAMAP" id="MF_00224">
    <property type="entry name" value="DHO_dh_type1"/>
    <property type="match status" value="1"/>
</dbReference>
<dbReference type="InterPro" id="IPR013785">
    <property type="entry name" value="Aldolase_TIM"/>
</dbReference>
<dbReference type="InterPro" id="IPR050074">
    <property type="entry name" value="DHO_dehydrogenase"/>
</dbReference>
<dbReference type="InterPro" id="IPR033888">
    <property type="entry name" value="DHOD_1B"/>
</dbReference>
<dbReference type="InterPro" id="IPR024920">
    <property type="entry name" value="Dihydroorotate_DH_1"/>
</dbReference>
<dbReference type="InterPro" id="IPR012135">
    <property type="entry name" value="Dihydroorotate_DH_1_2"/>
</dbReference>
<dbReference type="InterPro" id="IPR005720">
    <property type="entry name" value="Dihydroorotate_DH_cat"/>
</dbReference>
<dbReference type="InterPro" id="IPR001295">
    <property type="entry name" value="Dihydroorotate_DH_CS"/>
</dbReference>
<dbReference type="InterPro" id="IPR049622">
    <property type="entry name" value="Dihydroorotate_DH_I"/>
</dbReference>
<dbReference type="NCBIfam" id="NF005574">
    <property type="entry name" value="PRK07259.1"/>
    <property type="match status" value="1"/>
</dbReference>
<dbReference type="NCBIfam" id="TIGR01037">
    <property type="entry name" value="pyrD_sub1_fam"/>
    <property type="match status" value="1"/>
</dbReference>
<dbReference type="PANTHER" id="PTHR48109:SF1">
    <property type="entry name" value="DIHYDROOROTATE DEHYDROGENASE (FUMARATE)"/>
    <property type="match status" value="1"/>
</dbReference>
<dbReference type="PANTHER" id="PTHR48109">
    <property type="entry name" value="DIHYDROOROTATE DEHYDROGENASE (QUINONE), MITOCHONDRIAL-RELATED"/>
    <property type="match status" value="1"/>
</dbReference>
<dbReference type="Pfam" id="PF01180">
    <property type="entry name" value="DHO_dh"/>
    <property type="match status" value="1"/>
</dbReference>
<dbReference type="PIRSF" id="PIRSF000164">
    <property type="entry name" value="DHO_oxidase"/>
    <property type="match status" value="1"/>
</dbReference>
<dbReference type="SUPFAM" id="SSF51395">
    <property type="entry name" value="FMN-linked oxidoreductases"/>
    <property type="match status" value="1"/>
</dbReference>
<dbReference type="PROSITE" id="PS00911">
    <property type="entry name" value="DHODEHASE_1"/>
    <property type="match status" value="1"/>
</dbReference>
<dbReference type="PROSITE" id="PS00912">
    <property type="entry name" value="DHODEHASE_2"/>
    <property type="match status" value="1"/>
</dbReference>
<gene>
    <name type="primary">pyrD</name>
    <name type="ordered locus">BALH_3514</name>
</gene>
<reference key="1">
    <citation type="journal article" date="2007" name="J. Bacteriol.">
        <title>The complete genome sequence of Bacillus thuringiensis Al Hakam.</title>
        <authorList>
            <person name="Challacombe J.F."/>
            <person name="Altherr M.R."/>
            <person name="Xie G."/>
            <person name="Bhotika S.S."/>
            <person name="Brown N."/>
            <person name="Bruce D."/>
            <person name="Campbell C.S."/>
            <person name="Campbell M.L."/>
            <person name="Chen J."/>
            <person name="Chertkov O."/>
            <person name="Cleland C."/>
            <person name="Dimitrijevic M."/>
            <person name="Doggett N.A."/>
            <person name="Fawcett J.J."/>
            <person name="Glavina T."/>
            <person name="Goodwin L.A."/>
            <person name="Green L.D."/>
            <person name="Han C.S."/>
            <person name="Hill K.K."/>
            <person name="Hitchcock P."/>
            <person name="Jackson P.J."/>
            <person name="Keim P."/>
            <person name="Kewalramani A.R."/>
            <person name="Longmire J."/>
            <person name="Lucas S."/>
            <person name="Malfatti S."/>
            <person name="Martinez D."/>
            <person name="McMurry K."/>
            <person name="Meincke L.J."/>
            <person name="Misra M."/>
            <person name="Moseman B.L."/>
            <person name="Mundt M."/>
            <person name="Munk A.C."/>
            <person name="Okinaka R.T."/>
            <person name="Parson-Quintana B."/>
            <person name="Reilly L.P."/>
            <person name="Richardson P."/>
            <person name="Robinson D.L."/>
            <person name="Saunders E."/>
            <person name="Tapia R."/>
            <person name="Tesmer J.G."/>
            <person name="Thayer N."/>
            <person name="Thompson L.S."/>
            <person name="Tice H."/>
            <person name="Ticknor L.O."/>
            <person name="Wills P.L."/>
            <person name="Gilna P."/>
            <person name="Brettin T.S."/>
        </authorList>
    </citation>
    <scope>NUCLEOTIDE SEQUENCE [LARGE SCALE GENOMIC DNA]</scope>
    <source>
        <strain>Al Hakam</strain>
    </source>
</reference>